<name>TRUB_ZYMMO</name>
<reference key="1">
    <citation type="journal article" date="2005" name="Nat. Biotechnol.">
        <title>The genome sequence of the ethanologenic bacterium Zymomonas mobilis ZM4.</title>
        <authorList>
            <person name="Seo J.-S."/>
            <person name="Chong H."/>
            <person name="Park H.S."/>
            <person name="Yoon K.-O."/>
            <person name="Jung C."/>
            <person name="Kim J.J."/>
            <person name="Hong J.H."/>
            <person name="Kim H."/>
            <person name="Kim J.-H."/>
            <person name="Kil J.-I."/>
            <person name="Park C.J."/>
            <person name="Oh H.-M."/>
            <person name="Lee J.-S."/>
            <person name="Jin S.-J."/>
            <person name="Um H.-W."/>
            <person name="Lee H.-J."/>
            <person name="Oh S.-J."/>
            <person name="Kim J.Y."/>
            <person name="Kang H.L."/>
            <person name="Lee S.Y."/>
            <person name="Lee K.J."/>
            <person name="Kang H.S."/>
        </authorList>
    </citation>
    <scope>NUCLEOTIDE SEQUENCE [LARGE SCALE GENOMIC DNA]</scope>
    <source>
        <strain>ATCC 31821 / ZM4 / CP4</strain>
    </source>
</reference>
<comment type="function">
    <text evidence="1">Responsible for synthesis of pseudouridine from uracil-55 in the psi GC loop of transfer RNAs.</text>
</comment>
<comment type="catalytic activity">
    <reaction evidence="1">
        <text>uridine(55) in tRNA = pseudouridine(55) in tRNA</text>
        <dbReference type="Rhea" id="RHEA:42532"/>
        <dbReference type="Rhea" id="RHEA-COMP:10101"/>
        <dbReference type="Rhea" id="RHEA-COMP:10102"/>
        <dbReference type="ChEBI" id="CHEBI:65314"/>
        <dbReference type="ChEBI" id="CHEBI:65315"/>
        <dbReference type="EC" id="5.4.99.25"/>
    </reaction>
</comment>
<comment type="similarity">
    <text evidence="1">Belongs to the pseudouridine synthase TruB family. Type 1 subfamily.</text>
</comment>
<evidence type="ECO:0000255" key="1">
    <source>
        <dbReference type="HAMAP-Rule" id="MF_01080"/>
    </source>
</evidence>
<gene>
    <name evidence="1" type="primary">truB</name>
    <name type="ordered locus">ZMO0551</name>
</gene>
<proteinExistence type="inferred from homology"/>
<accession>Q5NQ30</accession>
<sequence length="303" mass="32587">MTLTPSPTDALHGWIILDKQEGLGSTQAVSAVKRAIRIAGLPKVKVGHGGTLDPLASGVLPVALGEATKLAGYALNSDKVYAFTLAFGAETDSLDREGSITAQSDKRPTREEVESVLSCFRGEIHQIPPVYSALKINGKRACDRVRAGETVTVKGRDITIHELTLDDFSPDQATFIAKVSKGTYIRSLARDIAHKLNCYGHVSYLRRLKSGPFTSEQAISLDKLMEMAQAGKLYQMLLPLTAGLDDIPALAVSSDQAKALRQGQKLIGINAESGLNMAMESQIPVALIEVTGQEARVLRGFNF</sequence>
<organism>
    <name type="scientific">Zymomonas mobilis subsp. mobilis (strain ATCC 31821 / ZM4 / CP4)</name>
    <dbReference type="NCBI Taxonomy" id="264203"/>
    <lineage>
        <taxon>Bacteria</taxon>
        <taxon>Pseudomonadati</taxon>
        <taxon>Pseudomonadota</taxon>
        <taxon>Alphaproteobacteria</taxon>
        <taxon>Sphingomonadales</taxon>
        <taxon>Zymomonadaceae</taxon>
        <taxon>Zymomonas</taxon>
    </lineage>
</organism>
<protein>
    <recommendedName>
        <fullName evidence="1">tRNA pseudouridine synthase B</fullName>
        <ecNumber evidence="1">5.4.99.25</ecNumber>
    </recommendedName>
    <alternativeName>
        <fullName evidence="1">tRNA pseudouridine(55) synthase</fullName>
        <shortName evidence="1">Psi55 synthase</shortName>
    </alternativeName>
    <alternativeName>
        <fullName evidence="1">tRNA pseudouridylate synthase</fullName>
    </alternativeName>
    <alternativeName>
        <fullName evidence="1">tRNA-uridine isomerase</fullName>
    </alternativeName>
</protein>
<keyword id="KW-0413">Isomerase</keyword>
<keyword id="KW-1185">Reference proteome</keyword>
<keyword id="KW-0819">tRNA processing</keyword>
<dbReference type="EC" id="5.4.99.25" evidence="1"/>
<dbReference type="EMBL" id="AE008692">
    <property type="protein sequence ID" value="AAV89175.1"/>
    <property type="molecule type" value="Genomic_DNA"/>
</dbReference>
<dbReference type="RefSeq" id="WP_011240457.1">
    <property type="nucleotide sequence ID" value="NZ_CP035711.1"/>
</dbReference>
<dbReference type="SMR" id="Q5NQ30"/>
<dbReference type="STRING" id="264203.ZMO0551"/>
<dbReference type="KEGG" id="zmo:ZMO0551"/>
<dbReference type="eggNOG" id="COG0130">
    <property type="taxonomic scope" value="Bacteria"/>
</dbReference>
<dbReference type="HOGENOM" id="CLU_032087_0_3_5"/>
<dbReference type="Proteomes" id="UP000001173">
    <property type="component" value="Chromosome"/>
</dbReference>
<dbReference type="GO" id="GO:0003723">
    <property type="term" value="F:RNA binding"/>
    <property type="evidence" value="ECO:0007669"/>
    <property type="project" value="InterPro"/>
</dbReference>
<dbReference type="GO" id="GO:0160148">
    <property type="term" value="F:tRNA pseudouridine(55) synthase activity"/>
    <property type="evidence" value="ECO:0007669"/>
    <property type="project" value="UniProtKB-EC"/>
</dbReference>
<dbReference type="GO" id="GO:1990481">
    <property type="term" value="P:mRNA pseudouridine synthesis"/>
    <property type="evidence" value="ECO:0007669"/>
    <property type="project" value="TreeGrafter"/>
</dbReference>
<dbReference type="GO" id="GO:0031119">
    <property type="term" value="P:tRNA pseudouridine synthesis"/>
    <property type="evidence" value="ECO:0007669"/>
    <property type="project" value="UniProtKB-UniRule"/>
</dbReference>
<dbReference type="CDD" id="cd02573">
    <property type="entry name" value="PseudoU_synth_EcTruB"/>
    <property type="match status" value="1"/>
</dbReference>
<dbReference type="Gene3D" id="3.30.2350.10">
    <property type="entry name" value="Pseudouridine synthase"/>
    <property type="match status" value="1"/>
</dbReference>
<dbReference type="HAMAP" id="MF_01080">
    <property type="entry name" value="TruB_bact"/>
    <property type="match status" value="1"/>
</dbReference>
<dbReference type="InterPro" id="IPR020103">
    <property type="entry name" value="PsdUridine_synth_cat_dom_sf"/>
</dbReference>
<dbReference type="InterPro" id="IPR002501">
    <property type="entry name" value="PsdUridine_synth_N"/>
</dbReference>
<dbReference type="InterPro" id="IPR014780">
    <property type="entry name" value="tRNA_psdUridine_synth_TruB"/>
</dbReference>
<dbReference type="InterPro" id="IPR032819">
    <property type="entry name" value="TruB_C"/>
</dbReference>
<dbReference type="NCBIfam" id="TIGR00431">
    <property type="entry name" value="TruB"/>
    <property type="match status" value="1"/>
</dbReference>
<dbReference type="PANTHER" id="PTHR13767:SF2">
    <property type="entry name" value="PSEUDOURIDYLATE SYNTHASE TRUB1"/>
    <property type="match status" value="1"/>
</dbReference>
<dbReference type="PANTHER" id="PTHR13767">
    <property type="entry name" value="TRNA-PSEUDOURIDINE SYNTHASE"/>
    <property type="match status" value="1"/>
</dbReference>
<dbReference type="Pfam" id="PF16198">
    <property type="entry name" value="TruB_C_2"/>
    <property type="match status" value="1"/>
</dbReference>
<dbReference type="Pfam" id="PF01509">
    <property type="entry name" value="TruB_N"/>
    <property type="match status" value="1"/>
</dbReference>
<dbReference type="SUPFAM" id="SSF55120">
    <property type="entry name" value="Pseudouridine synthase"/>
    <property type="match status" value="1"/>
</dbReference>
<feature type="chain" id="PRO_0000121953" description="tRNA pseudouridine synthase B">
    <location>
        <begin position="1"/>
        <end position="303"/>
    </location>
</feature>
<feature type="active site" description="Nucleophile" evidence="1">
    <location>
        <position position="53"/>
    </location>
</feature>